<protein>
    <recommendedName>
        <fullName evidence="1">Ribosome maturation factor RimP</fullName>
    </recommendedName>
</protein>
<evidence type="ECO:0000255" key="1">
    <source>
        <dbReference type="HAMAP-Rule" id="MF_01077"/>
    </source>
</evidence>
<evidence type="ECO:0000305" key="2"/>
<keyword id="KW-0963">Cytoplasm</keyword>
<keyword id="KW-0690">Ribosome biogenesis</keyword>
<organism>
    <name type="scientific">Escherichia coli O157:H7 (strain EC4115 / EHEC)</name>
    <dbReference type="NCBI Taxonomy" id="444450"/>
    <lineage>
        <taxon>Bacteria</taxon>
        <taxon>Pseudomonadati</taxon>
        <taxon>Pseudomonadota</taxon>
        <taxon>Gammaproteobacteria</taxon>
        <taxon>Enterobacterales</taxon>
        <taxon>Enterobacteriaceae</taxon>
        <taxon>Escherichia</taxon>
    </lineage>
</organism>
<reference key="1">
    <citation type="journal article" date="2011" name="Proc. Natl. Acad. Sci. U.S.A.">
        <title>Genomic anatomy of Escherichia coli O157:H7 outbreaks.</title>
        <authorList>
            <person name="Eppinger M."/>
            <person name="Mammel M.K."/>
            <person name="Leclerc J.E."/>
            <person name="Ravel J."/>
            <person name="Cebula T.A."/>
        </authorList>
    </citation>
    <scope>NUCLEOTIDE SEQUENCE [LARGE SCALE GENOMIC DNA]</scope>
    <source>
        <strain>EC4115 / EHEC</strain>
    </source>
</reference>
<proteinExistence type="inferred from homology"/>
<feature type="chain" id="PRO_0000384658" description="Ribosome maturation factor RimP">
    <location>
        <begin position="1"/>
        <end position="152"/>
    </location>
</feature>
<name>RIMP_ECO5E</name>
<sequence>MGLSTLEQKLTEMITAPVEALGFELVGIEFIRGRTSTLRIYIDSEDGINVDDCADVSHQVSAVLDVEDPITVAYNLEVSSPGLDRPLFTAEHYARFVGEEVTLVLRMAVQNRRKWQGVIKAVDGEMITVTVEGKDEVFALSNIQKANLVPHF</sequence>
<dbReference type="EMBL" id="CP001164">
    <property type="protein sequence ID" value="ACI39550.1"/>
    <property type="status" value="ALT_INIT"/>
    <property type="molecule type" value="Genomic_DNA"/>
</dbReference>
<dbReference type="SMR" id="B5YS60"/>
<dbReference type="KEGG" id="ecf:ECH74115_4491"/>
<dbReference type="HOGENOM" id="CLU_070525_1_1_6"/>
<dbReference type="GO" id="GO:0005829">
    <property type="term" value="C:cytosol"/>
    <property type="evidence" value="ECO:0007669"/>
    <property type="project" value="TreeGrafter"/>
</dbReference>
<dbReference type="GO" id="GO:0000028">
    <property type="term" value="P:ribosomal small subunit assembly"/>
    <property type="evidence" value="ECO:0007669"/>
    <property type="project" value="TreeGrafter"/>
</dbReference>
<dbReference type="GO" id="GO:0006412">
    <property type="term" value="P:translation"/>
    <property type="evidence" value="ECO:0007669"/>
    <property type="project" value="TreeGrafter"/>
</dbReference>
<dbReference type="CDD" id="cd01734">
    <property type="entry name" value="YlxS_C"/>
    <property type="match status" value="1"/>
</dbReference>
<dbReference type="FunFam" id="2.30.30.180:FF:000001">
    <property type="entry name" value="Ribosome maturation factor RimP"/>
    <property type="match status" value="1"/>
</dbReference>
<dbReference type="FunFam" id="3.30.300.70:FF:000001">
    <property type="entry name" value="Ribosome maturation factor RimP"/>
    <property type="match status" value="1"/>
</dbReference>
<dbReference type="Gene3D" id="2.30.30.180">
    <property type="entry name" value="Ribosome maturation factor RimP, C-terminal domain"/>
    <property type="match status" value="1"/>
</dbReference>
<dbReference type="Gene3D" id="3.30.300.70">
    <property type="entry name" value="RimP-like superfamily, N-terminal"/>
    <property type="match status" value="1"/>
</dbReference>
<dbReference type="HAMAP" id="MF_01077">
    <property type="entry name" value="RimP"/>
    <property type="match status" value="1"/>
</dbReference>
<dbReference type="InterPro" id="IPR003728">
    <property type="entry name" value="Ribosome_maturation_RimP"/>
</dbReference>
<dbReference type="InterPro" id="IPR028998">
    <property type="entry name" value="RimP_C"/>
</dbReference>
<dbReference type="InterPro" id="IPR036847">
    <property type="entry name" value="RimP_C_sf"/>
</dbReference>
<dbReference type="InterPro" id="IPR028989">
    <property type="entry name" value="RimP_N"/>
</dbReference>
<dbReference type="InterPro" id="IPR035956">
    <property type="entry name" value="RimP_N_sf"/>
</dbReference>
<dbReference type="NCBIfam" id="NF000927">
    <property type="entry name" value="PRK00092.1-1"/>
    <property type="match status" value="1"/>
</dbReference>
<dbReference type="PANTHER" id="PTHR33867">
    <property type="entry name" value="RIBOSOME MATURATION FACTOR RIMP"/>
    <property type="match status" value="1"/>
</dbReference>
<dbReference type="PANTHER" id="PTHR33867:SF1">
    <property type="entry name" value="RIBOSOME MATURATION FACTOR RIMP"/>
    <property type="match status" value="1"/>
</dbReference>
<dbReference type="Pfam" id="PF17384">
    <property type="entry name" value="DUF150_C"/>
    <property type="match status" value="1"/>
</dbReference>
<dbReference type="Pfam" id="PF02576">
    <property type="entry name" value="RimP_N"/>
    <property type="match status" value="1"/>
</dbReference>
<dbReference type="SUPFAM" id="SSF74942">
    <property type="entry name" value="YhbC-like, C-terminal domain"/>
    <property type="match status" value="1"/>
</dbReference>
<dbReference type="SUPFAM" id="SSF75420">
    <property type="entry name" value="YhbC-like, N-terminal domain"/>
    <property type="match status" value="1"/>
</dbReference>
<accession>B5YS60</accession>
<gene>
    <name evidence="1" type="primary">rimP</name>
    <name type="ordered locus">ECH74115_4491</name>
</gene>
<comment type="function">
    <text evidence="1">Required for maturation of 30S ribosomal subunits.</text>
</comment>
<comment type="subcellular location">
    <subcellularLocation>
        <location evidence="1">Cytoplasm</location>
    </subcellularLocation>
</comment>
<comment type="similarity">
    <text evidence="1">Belongs to the RimP family.</text>
</comment>
<comment type="sequence caution" evidence="2">
    <conflict type="erroneous initiation">
        <sequence resource="EMBL-CDS" id="ACI39550"/>
    </conflict>
</comment>